<comment type="function">
    <text evidence="1">Binds directly to 16S ribosomal RNA.</text>
</comment>
<comment type="similarity">
    <text evidence="1">Belongs to the bacterial ribosomal protein bS20 family.</text>
</comment>
<gene>
    <name evidence="1" type="primary">rpsT</name>
    <name type="ordered locus">ATP_00133</name>
</gene>
<evidence type="ECO:0000255" key="1">
    <source>
        <dbReference type="HAMAP-Rule" id="MF_00500"/>
    </source>
</evidence>
<evidence type="ECO:0000256" key="2">
    <source>
        <dbReference type="SAM" id="MobiDB-lite"/>
    </source>
</evidence>
<evidence type="ECO:0000305" key="3"/>
<protein>
    <recommendedName>
        <fullName evidence="1">Small ribosomal subunit protein bS20</fullName>
    </recommendedName>
    <alternativeName>
        <fullName evidence="3">30S ribosomal protein S20</fullName>
    </alternativeName>
</protein>
<proteinExistence type="inferred from homology"/>
<keyword id="KW-1185">Reference proteome</keyword>
<keyword id="KW-0687">Ribonucleoprotein</keyword>
<keyword id="KW-0689">Ribosomal protein</keyword>
<keyword id="KW-0694">RNA-binding</keyword>
<keyword id="KW-0699">rRNA-binding</keyword>
<reference key="1">
    <citation type="journal article" date="2008" name="BMC Genomics">
        <title>The linear chromosome of the plant-pathogenic mycoplasma 'Candidatus Phytoplasma mali'.</title>
        <authorList>
            <person name="Kube M."/>
            <person name="Schneider B."/>
            <person name="Kuhl H."/>
            <person name="Dandekar T."/>
            <person name="Heitmann K."/>
            <person name="Migdoll A.M."/>
            <person name="Reinhardt R."/>
            <person name="Seemueller E."/>
        </authorList>
    </citation>
    <scope>NUCLEOTIDE SEQUENCE [LARGE SCALE GENOMIC DNA]</scope>
    <source>
        <strain>AT</strain>
    </source>
</reference>
<organism>
    <name type="scientific">Phytoplasma mali (strain AT)</name>
    <dbReference type="NCBI Taxonomy" id="482235"/>
    <lineage>
        <taxon>Bacteria</taxon>
        <taxon>Bacillati</taxon>
        <taxon>Mycoplasmatota</taxon>
        <taxon>Mollicutes</taxon>
        <taxon>Acholeplasmatales</taxon>
        <taxon>Acholeplasmataceae</taxon>
        <taxon>Candidatus Phytoplasma</taxon>
        <taxon>16SrX (Apple proliferation group)</taxon>
    </lineage>
</organism>
<sequence>MANIKQQIKRNKTNEKRRLKNVSFKSSVKTAIKKLNKAIENKNKSEALLLLNLSYKKLDKGISKKVYSKNFVSRHKSNLSKLVNNIN</sequence>
<name>RS20_PHYMT</name>
<accession>B3R0F6</accession>
<feature type="chain" id="PRO_1000194258" description="Small ribosomal subunit protein bS20">
    <location>
        <begin position="1"/>
        <end position="87"/>
    </location>
</feature>
<feature type="region of interest" description="Disordered" evidence="2">
    <location>
        <begin position="1"/>
        <end position="21"/>
    </location>
</feature>
<feature type="compositionally biased region" description="Basic residues" evidence="2">
    <location>
        <begin position="7"/>
        <end position="20"/>
    </location>
</feature>
<dbReference type="EMBL" id="CU469464">
    <property type="protein sequence ID" value="CAP18320.1"/>
    <property type="molecule type" value="Genomic_DNA"/>
</dbReference>
<dbReference type="SMR" id="B3R0F6"/>
<dbReference type="STRING" id="37692.ATP_00133"/>
<dbReference type="KEGG" id="pml:ATP_00133"/>
<dbReference type="eggNOG" id="COG0268">
    <property type="taxonomic scope" value="Bacteria"/>
</dbReference>
<dbReference type="HOGENOM" id="CLU_160655_0_1_14"/>
<dbReference type="Proteomes" id="UP000002020">
    <property type="component" value="Chromosome"/>
</dbReference>
<dbReference type="GO" id="GO:0005829">
    <property type="term" value="C:cytosol"/>
    <property type="evidence" value="ECO:0007669"/>
    <property type="project" value="TreeGrafter"/>
</dbReference>
<dbReference type="GO" id="GO:0015935">
    <property type="term" value="C:small ribosomal subunit"/>
    <property type="evidence" value="ECO:0007669"/>
    <property type="project" value="TreeGrafter"/>
</dbReference>
<dbReference type="GO" id="GO:0070181">
    <property type="term" value="F:small ribosomal subunit rRNA binding"/>
    <property type="evidence" value="ECO:0007669"/>
    <property type="project" value="TreeGrafter"/>
</dbReference>
<dbReference type="GO" id="GO:0003735">
    <property type="term" value="F:structural constituent of ribosome"/>
    <property type="evidence" value="ECO:0007669"/>
    <property type="project" value="InterPro"/>
</dbReference>
<dbReference type="GO" id="GO:0006412">
    <property type="term" value="P:translation"/>
    <property type="evidence" value="ECO:0007669"/>
    <property type="project" value="UniProtKB-UniRule"/>
</dbReference>
<dbReference type="Gene3D" id="1.20.58.110">
    <property type="entry name" value="Ribosomal protein S20"/>
    <property type="match status" value="1"/>
</dbReference>
<dbReference type="HAMAP" id="MF_00500">
    <property type="entry name" value="Ribosomal_bS20"/>
    <property type="match status" value="1"/>
</dbReference>
<dbReference type="InterPro" id="IPR002583">
    <property type="entry name" value="Ribosomal_bS20"/>
</dbReference>
<dbReference type="InterPro" id="IPR036510">
    <property type="entry name" value="Ribosomal_bS20_sf"/>
</dbReference>
<dbReference type="NCBIfam" id="TIGR00029">
    <property type="entry name" value="S20"/>
    <property type="match status" value="1"/>
</dbReference>
<dbReference type="PANTHER" id="PTHR33398">
    <property type="entry name" value="30S RIBOSOMAL PROTEIN S20"/>
    <property type="match status" value="1"/>
</dbReference>
<dbReference type="PANTHER" id="PTHR33398:SF1">
    <property type="entry name" value="SMALL RIBOSOMAL SUBUNIT PROTEIN BS20C"/>
    <property type="match status" value="1"/>
</dbReference>
<dbReference type="Pfam" id="PF01649">
    <property type="entry name" value="Ribosomal_S20p"/>
    <property type="match status" value="1"/>
</dbReference>
<dbReference type="SUPFAM" id="SSF46992">
    <property type="entry name" value="Ribosomal protein S20"/>
    <property type="match status" value="1"/>
</dbReference>